<organism>
    <name type="scientific">Escherichia phage 186</name>
    <name type="common">Bacteriophage 186</name>
    <dbReference type="NCBI Taxonomy" id="29252"/>
    <lineage>
        <taxon>Viruses</taxon>
        <taxon>Duplodnaviria</taxon>
        <taxon>Heunggongvirae</taxon>
        <taxon>Uroviricota</taxon>
        <taxon>Caudoviricetes</taxon>
        <taxon>Peduoviridae</taxon>
        <taxon>Eganvirus</taxon>
    </lineage>
</organism>
<gene>
    <name type="primary">CP84</name>
</gene>
<accession>P41062</accession>
<dbReference type="EMBL" id="U32222">
    <property type="protein sequence ID" value="AAC34185.1"/>
    <property type="molecule type" value="Genomic_DNA"/>
</dbReference>
<dbReference type="PIR" id="S10631">
    <property type="entry name" value="S10631"/>
</dbReference>
<dbReference type="RefSeq" id="NP_052288.1">
    <property type="nucleotide sequence ID" value="NC_001317.1"/>
</dbReference>
<dbReference type="KEGG" id="vg:1262424"/>
<dbReference type="OrthoDB" id="15530at10239"/>
<dbReference type="Proteomes" id="UP000000369">
    <property type="component" value="Segment"/>
</dbReference>
<dbReference type="GO" id="GO:0016491">
    <property type="term" value="F:oxidoreductase activity"/>
    <property type="evidence" value="ECO:0007669"/>
    <property type="project" value="UniProtKB-KW"/>
</dbReference>
<dbReference type="CDD" id="cd23947">
    <property type="entry name" value="PAPS_reductase-like_YbdN"/>
    <property type="match status" value="1"/>
</dbReference>
<dbReference type="Gene3D" id="3.40.50.620">
    <property type="entry name" value="HUPs"/>
    <property type="match status" value="1"/>
</dbReference>
<dbReference type="InterPro" id="IPR002500">
    <property type="entry name" value="PAPS_reduct_dom"/>
</dbReference>
<dbReference type="InterPro" id="IPR014729">
    <property type="entry name" value="Rossmann-like_a/b/a_fold"/>
</dbReference>
<dbReference type="InterPro" id="IPR050128">
    <property type="entry name" value="Sulfate_adenylyltrnsfr_sub2"/>
</dbReference>
<dbReference type="PANTHER" id="PTHR43196:SF2">
    <property type="entry name" value="PHOSPHOADENOSINE PHOSPHOSULFATE REDUCTASE"/>
    <property type="match status" value="1"/>
</dbReference>
<dbReference type="PANTHER" id="PTHR43196">
    <property type="entry name" value="SULFATE ADENYLYLTRANSFERASE SUBUNIT 2"/>
    <property type="match status" value="1"/>
</dbReference>
<dbReference type="Pfam" id="PF01507">
    <property type="entry name" value="PAPS_reduct"/>
    <property type="match status" value="1"/>
</dbReference>
<dbReference type="SUPFAM" id="SSF52402">
    <property type="entry name" value="Adenine nucleotide alpha hydrolases-like"/>
    <property type="match status" value="1"/>
</dbReference>
<organismHost>
    <name type="scientific">Escherichia coli</name>
    <dbReference type="NCBI Taxonomy" id="562"/>
</organismHost>
<feature type="chain" id="PRO_0000100692" description="Uncharacterized 37.8 kDa protein in gpa 5'region">
    <location>
        <begin position="1"/>
        <end position="334"/>
    </location>
</feature>
<reference key="1">
    <citation type="journal article" date="1990" name="J. Mol. Biol.">
        <title>DNA replication studies with coliphage 186. III. A single phage gene is required for phage 186 replication.</title>
        <authorList>
            <person name="Sivaprasad A.V."/>
            <person name="Jarvinen R."/>
            <person name="Puspurs A."/>
            <person name="Egan J.B."/>
        </authorList>
    </citation>
    <scope>NUCLEOTIDE SEQUENCE [GENOMIC DNA]</scope>
    <source>
        <strain>186CITSP</strain>
    </source>
</reference>
<evidence type="ECO:0000305" key="1"/>
<keyword id="KW-0560">Oxidoreductase</keyword>
<keyword id="KW-1185">Reference proteome</keyword>
<sequence>MIDSRCFAESTINIVSVSGGKDSLAQWILAVENDVPRTTVFADTGHEHSQTMEYLDYLESRLGPVIRVKADFTRRIEGKRKFIAEKWPVSLVEECGMSHEQAAERIAKALEILKPTGNPFLDLCMWKGRFPSTKARFCSLELKHDSVRDKIVLPALEKYDEVILWQGVRAQESPARAALPMWEEDADNTPGLHVYRPILNWTHEDVFALAKRHGIKPNPLYQQGCSRVGCMPCIHARKSELAEIFARWPEEIARVAEWERLVAACSRRGNSTFFPSTHDPRRAEKRIEVVTVEEYGIASYRDWAMTTRGGSQYDLLAATNDKTVCSSVYAGVCE</sequence>
<comment type="similarity">
    <text evidence="1">Belongs to the PAPS reductase family.</text>
</comment>
<proteinExistence type="inferred from homology"/>
<protein>
    <recommendedName>
        <fullName>Uncharacterized 37.8 kDa protein in gpa 5'region</fullName>
    </recommendedName>
</protein>
<name>CP84_BP186</name>